<evidence type="ECO:0000250" key="1">
    <source>
        <dbReference type="UniProtKB" id="O89017"/>
    </source>
</evidence>
<evidence type="ECO:0000250" key="2">
    <source>
        <dbReference type="UniProtKB" id="P49043"/>
    </source>
</evidence>
<evidence type="ECO:0000250" key="3">
    <source>
        <dbReference type="UniProtKB" id="P49046"/>
    </source>
</evidence>
<evidence type="ECO:0000250" key="4">
    <source>
        <dbReference type="UniProtKB" id="Q84LM2"/>
    </source>
</evidence>
<evidence type="ECO:0000255" key="5"/>
<evidence type="ECO:0000255" key="6">
    <source>
        <dbReference type="PROSITE-ProRule" id="PRU00498"/>
    </source>
</evidence>
<evidence type="ECO:0000269" key="7">
    <source>
    </source>
</evidence>
<evidence type="ECO:0000269" key="8">
    <source>
    </source>
</evidence>
<evidence type="ECO:0000269" key="9">
    <source>
    </source>
</evidence>
<evidence type="ECO:0000269" key="10">
    <source>
    </source>
</evidence>
<evidence type="ECO:0000303" key="11">
    <source>
    </source>
</evidence>
<evidence type="ECO:0000305" key="12"/>
<evidence type="ECO:0000312" key="13">
    <source>
        <dbReference type="Araport" id="AT1G62710"/>
    </source>
</evidence>
<evidence type="ECO:0000312" key="14">
    <source>
        <dbReference type="EMBL" id="AAF19550.1"/>
    </source>
</evidence>
<evidence type="ECO:0007829" key="15">
    <source>
        <dbReference type="PDB" id="6YSA"/>
    </source>
</evidence>
<proteinExistence type="evidence at protein level"/>
<protein>
    <recommendedName>
        <fullName evidence="11">Vacuolar-processing enzyme beta-isozyme</fullName>
        <ecNumber evidence="4">3.4.22.34</ecNumber>
    </recommendedName>
    <alternativeName>
        <fullName evidence="12">Asparaginyl endopeptidase beta-VPE</fullName>
    </alternativeName>
    <alternativeName>
        <fullName evidence="11">Beta-VPE</fullName>
    </alternativeName>
</protein>
<accession>Q39044</accession>
<accession>Q93VS7</accession>
<accession>Q9SI79</accession>
<sequence>MAKSCYFRPALLLLLVLLVHAESRGRFEPKILMPTEEANPADQDEDGVGTRWAVLVAGSSGYGNYRHQADVCHAYQILRKGGLKEENIVVLMYDDIANHPLNPRPGTLINHPDGDDVYAGVPKDYTGSSVTAANFYAVLLGDQKAVKGGSGKVIASKPNDHIFVYYADHGGPGVLGMPNTPHIYAADFIETLKKKHASGTYKEMVIYVEACESGSIFEGIMPKDLNIYVTTASNAQESSYGTYCPGMNPSPPSEYITCLGDLYSVAWMEDSETHNLKKETIKQQYHTVKMRTSNYNTYSGGSHVMEYGNNSIKSEKLYLYQGFDPATVNLPLNELPVKSKIGVVNQRDADLLFLWHMYRTSEDGSRKKDDTLKELTETTRHRKHLDASVELIATILFGPTMNVLNLVREPGLPLVDDWECLKSMVRVFEEHCGSLTQYGMKHMRAFANVCNNGVSKELMEEASTAACGGYSEARYTVHPSILGYSA</sequence>
<reference key="1">
    <citation type="journal article" date="1995" name="Plant Mol. Biol.">
        <title>Homologues of a vacuolar processing enzyme that are expressed in different organs in Arabidopsis thaliana.</title>
        <authorList>
            <person name="Kinoshita T."/>
            <person name="Nishimura M."/>
            <person name="Hara-Nishimura I."/>
        </authorList>
    </citation>
    <scope>NUCLEOTIDE SEQUENCE [GENOMIC DNA]</scope>
    <scope>TISSUE SPECIFICITY</scope>
    <scope>SUBCELLULAR LOCATION</scope>
    <source>
        <strain>cv. Columbia</strain>
    </source>
</reference>
<reference key="2">
    <citation type="journal article" date="2000" name="Nature">
        <title>Sequence and analysis of chromosome 1 of the plant Arabidopsis thaliana.</title>
        <authorList>
            <person name="Theologis A."/>
            <person name="Ecker J.R."/>
            <person name="Palm C.J."/>
            <person name="Federspiel N.A."/>
            <person name="Kaul S."/>
            <person name="White O."/>
            <person name="Alonso J."/>
            <person name="Altafi H."/>
            <person name="Araujo R."/>
            <person name="Bowman C.L."/>
            <person name="Brooks S.Y."/>
            <person name="Buehler E."/>
            <person name="Chan A."/>
            <person name="Chao Q."/>
            <person name="Chen H."/>
            <person name="Cheuk R.F."/>
            <person name="Chin C.W."/>
            <person name="Chung M.K."/>
            <person name="Conn L."/>
            <person name="Conway A.B."/>
            <person name="Conway A.R."/>
            <person name="Creasy T.H."/>
            <person name="Dewar K."/>
            <person name="Dunn P."/>
            <person name="Etgu P."/>
            <person name="Feldblyum T.V."/>
            <person name="Feng J.-D."/>
            <person name="Fong B."/>
            <person name="Fujii C.Y."/>
            <person name="Gill J.E."/>
            <person name="Goldsmith A.D."/>
            <person name="Haas B."/>
            <person name="Hansen N.F."/>
            <person name="Hughes B."/>
            <person name="Huizar L."/>
            <person name="Hunter J.L."/>
            <person name="Jenkins J."/>
            <person name="Johnson-Hopson C."/>
            <person name="Khan S."/>
            <person name="Khaykin E."/>
            <person name="Kim C.J."/>
            <person name="Koo H.L."/>
            <person name="Kremenetskaia I."/>
            <person name="Kurtz D.B."/>
            <person name="Kwan A."/>
            <person name="Lam B."/>
            <person name="Langin-Hooper S."/>
            <person name="Lee A."/>
            <person name="Lee J.M."/>
            <person name="Lenz C.A."/>
            <person name="Li J.H."/>
            <person name="Li Y.-P."/>
            <person name="Lin X."/>
            <person name="Liu S.X."/>
            <person name="Liu Z.A."/>
            <person name="Luros J.S."/>
            <person name="Maiti R."/>
            <person name="Marziali A."/>
            <person name="Militscher J."/>
            <person name="Miranda M."/>
            <person name="Nguyen M."/>
            <person name="Nierman W.C."/>
            <person name="Osborne B.I."/>
            <person name="Pai G."/>
            <person name="Peterson J."/>
            <person name="Pham P.K."/>
            <person name="Rizzo M."/>
            <person name="Rooney T."/>
            <person name="Rowley D."/>
            <person name="Sakano H."/>
            <person name="Salzberg S.L."/>
            <person name="Schwartz J.R."/>
            <person name="Shinn P."/>
            <person name="Southwick A.M."/>
            <person name="Sun H."/>
            <person name="Tallon L.J."/>
            <person name="Tambunga G."/>
            <person name="Toriumi M.J."/>
            <person name="Town C.D."/>
            <person name="Utterback T."/>
            <person name="Van Aken S."/>
            <person name="Vaysberg M."/>
            <person name="Vysotskaia V.S."/>
            <person name="Walker M."/>
            <person name="Wu D."/>
            <person name="Yu G."/>
            <person name="Fraser C.M."/>
            <person name="Venter J.C."/>
            <person name="Davis R.W."/>
        </authorList>
    </citation>
    <scope>NUCLEOTIDE SEQUENCE [LARGE SCALE GENOMIC DNA]</scope>
    <source>
        <strain>cv. Columbia</strain>
    </source>
</reference>
<reference key="3">
    <citation type="journal article" date="2017" name="Plant J.">
        <title>Araport11: a complete reannotation of the Arabidopsis thaliana reference genome.</title>
        <authorList>
            <person name="Cheng C.Y."/>
            <person name="Krishnakumar V."/>
            <person name="Chan A.P."/>
            <person name="Thibaud-Nissen F."/>
            <person name="Schobel S."/>
            <person name="Town C.D."/>
        </authorList>
    </citation>
    <scope>GENOME REANNOTATION</scope>
    <source>
        <strain>cv. Columbia</strain>
    </source>
</reference>
<reference key="4">
    <citation type="journal article" date="2003" name="Science">
        <title>Empirical analysis of transcriptional activity in the Arabidopsis genome.</title>
        <authorList>
            <person name="Yamada K."/>
            <person name="Lim J."/>
            <person name="Dale J.M."/>
            <person name="Chen H."/>
            <person name="Shinn P."/>
            <person name="Palm C.J."/>
            <person name="Southwick A.M."/>
            <person name="Wu H.C."/>
            <person name="Kim C.J."/>
            <person name="Nguyen M."/>
            <person name="Pham P.K."/>
            <person name="Cheuk R.F."/>
            <person name="Karlin-Newmann G."/>
            <person name="Liu S.X."/>
            <person name="Lam B."/>
            <person name="Sakano H."/>
            <person name="Wu T."/>
            <person name="Yu G."/>
            <person name="Miranda M."/>
            <person name="Quach H.L."/>
            <person name="Tripp M."/>
            <person name="Chang C.H."/>
            <person name="Lee J.M."/>
            <person name="Toriumi M.J."/>
            <person name="Chan M.M."/>
            <person name="Tang C.C."/>
            <person name="Onodera C.S."/>
            <person name="Deng J.M."/>
            <person name="Akiyama K."/>
            <person name="Ansari Y."/>
            <person name="Arakawa T."/>
            <person name="Banh J."/>
            <person name="Banno F."/>
            <person name="Bowser L."/>
            <person name="Brooks S.Y."/>
            <person name="Carninci P."/>
            <person name="Chao Q."/>
            <person name="Choy N."/>
            <person name="Enju A."/>
            <person name="Goldsmith A.D."/>
            <person name="Gurjal M."/>
            <person name="Hansen N.F."/>
            <person name="Hayashizaki Y."/>
            <person name="Johnson-Hopson C."/>
            <person name="Hsuan V.W."/>
            <person name="Iida K."/>
            <person name="Karnes M."/>
            <person name="Khan S."/>
            <person name="Koesema E."/>
            <person name="Ishida J."/>
            <person name="Jiang P.X."/>
            <person name="Jones T."/>
            <person name="Kawai J."/>
            <person name="Kamiya A."/>
            <person name="Meyers C."/>
            <person name="Nakajima M."/>
            <person name="Narusaka M."/>
            <person name="Seki M."/>
            <person name="Sakurai T."/>
            <person name="Satou M."/>
            <person name="Tamse R."/>
            <person name="Vaysberg M."/>
            <person name="Wallender E.K."/>
            <person name="Wong C."/>
            <person name="Yamamura Y."/>
            <person name="Yuan S."/>
            <person name="Shinozaki K."/>
            <person name="Davis R.W."/>
            <person name="Theologis A."/>
            <person name="Ecker J.R."/>
        </authorList>
    </citation>
    <scope>NUCLEOTIDE SEQUENCE [LARGE SCALE MRNA]</scope>
    <source>
        <strain>cv. Columbia</strain>
    </source>
</reference>
<reference key="5">
    <citation type="journal article" date="1999" name="Plant J.">
        <title>Vacuolar processing enzyme is up-regulated in the lytic vacuoles of vegetative tissues during senescence and under various stressed conditions.</title>
        <authorList>
            <person name="Kinoshita T."/>
            <person name="Yamada K."/>
            <person name="Hiraiwa N."/>
            <person name="Kondo M."/>
            <person name="Nishimura M."/>
            <person name="Hara-Nishimura I."/>
        </authorList>
    </citation>
    <scope>TISSUE SPECIFICITY</scope>
    <scope>SUBCELLULAR LOCATION</scope>
    <source>
        <strain>cv. Columbia</strain>
    </source>
</reference>
<reference key="6">
    <citation type="journal article" date="2002" name="Plant Cell">
        <title>Redundant proteolytic mechanisms process seed storage proteins in the absence of seed-type members of the vacuolar processing enzyme family of cysteine proteases.</title>
        <authorList>
            <person name="Gruis D.F."/>
            <person name="Selinger D.A."/>
            <person name="Curran J.M."/>
            <person name="Jung R."/>
        </authorList>
    </citation>
    <scope>FUNCTION</scope>
    <scope>DISRUPTION PHENOTYPE</scope>
    <source>
        <strain>cv. Columbia</strain>
    </source>
</reference>
<reference key="7">
    <citation type="journal article" date="2004" name="Plant Cell">
        <title>Storage protein accumulation in the absence of the vacuolar processing enzyme family of cysteine proteases.</title>
        <authorList>
            <person name="Gruis D."/>
            <person name="Schulze J."/>
            <person name="Jung R."/>
        </authorList>
    </citation>
    <scope>FUNCTION</scope>
    <scope>DISRUPTION PHENOTYPE</scope>
    <scope>TISSUE SPECIFICITY</scope>
</reference>
<keyword id="KW-0002">3D-structure</keyword>
<keyword id="KW-1015">Disulfide bond</keyword>
<keyword id="KW-0325">Glycoprotein</keyword>
<keyword id="KW-0378">Hydrolase</keyword>
<keyword id="KW-0645">Protease</keyword>
<keyword id="KW-1185">Reference proteome</keyword>
<keyword id="KW-0732">Signal</keyword>
<keyword id="KW-0788">Thiol protease</keyword>
<keyword id="KW-0926">Vacuole</keyword>
<gene>
    <name evidence="11" type="primary">bVPE</name>
    <name evidence="13" type="ordered locus">At1g62710</name>
    <name evidence="14" type="ORF">F23N19.7</name>
</gene>
<feature type="signal peptide" evidence="5">
    <location>
        <begin position="1"/>
        <end position="21"/>
    </location>
</feature>
<feature type="chain" id="PRO_0000026527" description="Vacuolar-processing enzyme beta-isozyme">
    <location>
        <begin position="22"/>
        <end position="486"/>
    </location>
</feature>
<feature type="active site" evidence="1">
    <location>
        <position position="169"/>
    </location>
</feature>
<feature type="active site" description="Nucleophile" evidence="1">
    <location>
        <position position="211"/>
    </location>
</feature>
<feature type="site" description="Required for post-translational maturation and enzyme activity" evidence="4">
    <location>
        <position position="258"/>
    </location>
</feature>
<feature type="glycosylation site" description="N-linked (GlcNAc...) asparagine" evidence="6">
    <location>
        <position position="309"/>
    </location>
</feature>
<feature type="disulfide bond" evidence="3">
    <location>
        <begin position="244"/>
        <end position="258"/>
    </location>
</feature>
<feature type="disulfide bond" evidence="3">
    <location>
        <begin position="420"/>
        <end position="450"/>
    </location>
</feature>
<feature type="disulfide bond" evidence="3">
    <location>
        <begin position="432"/>
        <end position="467"/>
    </location>
</feature>
<feature type="sequence conflict" description="In Ref. 1; BAA09615." evidence="12" ref="1">
    <location>
        <begin position="288"/>
        <end position="289"/>
    </location>
</feature>
<feature type="sequence conflict" description="In Ref. 1; BAA09615." evidence="12" ref="1">
    <original>D</original>
    <variation>E</variation>
    <location>
        <position position="324"/>
    </location>
</feature>
<feature type="sequence conflict" description="In Ref. 1; BAA09615." evidence="12" ref="1">
    <original>V</original>
    <variation>A</variation>
    <location>
        <position position="337"/>
    </location>
</feature>
<feature type="sequence conflict" description="In Ref. 1; BAA09615." evidence="12" ref="1">
    <original>Y</original>
    <variation>H</variation>
    <location>
        <position position="358"/>
    </location>
</feature>
<feature type="strand" evidence="15">
    <location>
        <begin position="51"/>
        <end position="57"/>
    </location>
</feature>
<feature type="helix" evidence="15">
    <location>
        <begin position="62"/>
        <end position="64"/>
    </location>
</feature>
<feature type="helix" evidence="15">
    <location>
        <begin position="65"/>
        <end position="80"/>
    </location>
</feature>
<feature type="helix" evidence="15">
    <location>
        <begin position="85"/>
        <end position="87"/>
    </location>
</feature>
<feature type="strand" evidence="15">
    <location>
        <begin position="88"/>
        <end position="91"/>
    </location>
</feature>
<feature type="helix" evidence="15">
    <location>
        <begin position="127"/>
        <end position="129"/>
    </location>
</feature>
<feature type="helix" evidence="15">
    <location>
        <begin position="132"/>
        <end position="140"/>
    </location>
</feature>
<feature type="turn" evidence="15">
    <location>
        <begin position="143"/>
        <end position="145"/>
    </location>
</feature>
<feature type="strand" evidence="15">
    <location>
        <begin position="161"/>
        <end position="168"/>
    </location>
</feature>
<feature type="strand" evidence="15">
    <location>
        <begin position="178"/>
        <end position="181"/>
    </location>
</feature>
<feature type="helix" evidence="15">
    <location>
        <begin position="185"/>
        <end position="198"/>
    </location>
</feature>
<feature type="strand" evidence="15">
    <location>
        <begin position="202"/>
        <end position="210"/>
    </location>
</feature>
<feature type="helix" evidence="15">
    <location>
        <begin position="213"/>
        <end position="216"/>
    </location>
</feature>
<feature type="turn" evidence="15">
    <location>
        <begin position="217"/>
        <end position="220"/>
    </location>
</feature>
<feature type="strand" evidence="15">
    <location>
        <begin position="223"/>
        <end position="233"/>
    </location>
</feature>
<feature type="strand" evidence="15">
    <location>
        <begin position="235"/>
        <end position="237"/>
    </location>
</feature>
<feature type="strand" evidence="15">
    <location>
        <begin position="240"/>
        <end position="243"/>
    </location>
</feature>
<feature type="strand" evidence="15">
    <location>
        <begin position="247"/>
        <end position="249"/>
    </location>
</feature>
<feature type="helix" evidence="15">
    <location>
        <begin position="262"/>
        <end position="271"/>
    </location>
</feature>
<feature type="turn" evidence="15">
    <location>
        <begin position="276"/>
        <end position="278"/>
    </location>
</feature>
<feature type="helix" evidence="15">
    <location>
        <begin position="281"/>
        <end position="292"/>
    </location>
</feature>
<feature type="turn" evidence="15">
    <location>
        <begin position="293"/>
        <end position="297"/>
    </location>
</feature>
<feature type="strand" evidence="15">
    <location>
        <begin position="305"/>
        <end position="308"/>
    </location>
</feature>
<feature type="helix" evidence="15">
    <location>
        <begin position="310"/>
        <end position="314"/>
    </location>
</feature>
<feature type="helix" evidence="15">
    <location>
        <begin position="318"/>
        <end position="321"/>
    </location>
</feature>
<feature type="helix" evidence="15">
    <location>
        <begin position="325"/>
        <end position="327"/>
    </location>
</feature>
<feature type="helix" evidence="15">
    <location>
        <begin position="332"/>
        <end position="334"/>
    </location>
</feature>
<feature type="strand" evidence="15">
    <location>
        <begin position="343"/>
        <end position="345"/>
    </location>
</feature>
<feature type="turn" evidence="15">
    <location>
        <begin position="346"/>
        <end position="348"/>
    </location>
</feature>
<feature type="helix" evidence="15">
    <location>
        <begin position="349"/>
        <end position="359"/>
    </location>
</feature>
<feature type="helix" evidence="15">
    <location>
        <begin position="367"/>
        <end position="397"/>
    </location>
</feature>
<feature type="strand" evidence="15">
    <location>
        <begin position="399"/>
        <end position="401"/>
    </location>
</feature>
<feature type="helix" evidence="15">
    <location>
        <begin position="403"/>
        <end position="405"/>
    </location>
</feature>
<feature type="helix" evidence="15">
    <location>
        <begin position="418"/>
        <end position="432"/>
    </location>
</feature>
<feature type="helix" evidence="15">
    <location>
        <begin position="438"/>
        <end position="442"/>
    </location>
</feature>
<feature type="helix" evidence="15">
    <location>
        <begin position="443"/>
        <end position="451"/>
    </location>
</feature>
<feature type="helix" evidence="15">
    <location>
        <begin position="456"/>
        <end position="467"/>
    </location>
</feature>
<comment type="function">
    <text evidence="2 8 9">Asparagine-specific endopeptidase involved in the processing of vacuolar seed protein precursors into the mature forms (By similarity). Probably involved in post-translational proteolysis of seed storage proteins in the protein storage vacuole of developing seeds (PubMed:12417707, PubMed:14688293).</text>
</comment>
<comment type="catalytic activity">
    <reaction evidence="4">
        <text>Hydrolysis of proteins and small molecule substrates at -Asn-|-Xaa- bonds.</text>
        <dbReference type="EC" id="3.4.22.34"/>
    </reaction>
</comment>
<comment type="subcellular location">
    <subcellularLocation>
        <location evidence="10">Vacuole</location>
    </subcellularLocation>
    <subcellularLocation>
        <location evidence="7">Protein storage vacuole</location>
    </subcellularLocation>
</comment>
<comment type="tissue specificity">
    <text evidence="7 9 10">Seed specific. Also expressed in the flowers and buds.</text>
</comment>
<comment type="PTM">
    <text evidence="4">Auto-catalytic activation.</text>
</comment>
<comment type="disruption phenotype">
    <text evidence="8 9">No macroscopic phenotype, probably due to functional redundancy (PubMed:12417707, PubMed:14688293). Slight differences in polypeptide accumulation in seeds with an increased amount of propolypeptide forms of legumin-type globulins (PubMed:12417707). In plants lacking all vacuolar-processing enzyme isozymes (e.g. alpha, beta, gamma and delta) shift of storage protein accumulation from normally processed polypeptides to a finite number of prominent alternatively processed polypeptides cleaved at sites other than the conserved Asn residues targeted by VPE (PubMed:14688293).</text>
</comment>
<comment type="similarity">
    <text evidence="12">Belongs to the peptidase C13 family.</text>
</comment>
<comment type="sequence caution" evidence="12">
    <conflict type="erroneous gene model prediction">
        <sequence resource="EMBL-CDS" id="AAF19550"/>
    </conflict>
</comment>
<name>VPEB_ARATH</name>
<dbReference type="EC" id="3.4.22.34" evidence="4"/>
<dbReference type="EMBL" id="D61394">
    <property type="protein sequence ID" value="BAA09615.1"/>
    <property type="molecule type" value="Genomic_DNA"/>
</dbReference>
<dbReference type="EMBL" id="AC007190">
    <property type="protein sequence ID" value="AAF19550.1"/>
    <property type="status" value="ALT_SEQ"/>
    <property type="molecule type" value="Genomic_DNA"/>
</dbReference>
<dbReference type="EMBL" id="CP002684">
    <property type="protein sequence ID" value="AEE33996.1"/>
    <property type="molecule type" value="Genomic_DNA"/>
</dbReference>
<dbReference type="EMBL" id="AY059156">
    <property type="protein sequence ID" value="AAL15381.1"/>
    <property type="molecule type" value="mRNA"/>
</dbReference>
<dbReference type="EMBL" id="AF367254">
    <property type="protein sequence ID" value="AAK56243.1"/>
    <property type="molecule type" value="mRNA"/>
</dbReference>
<dbReference type="PIR" id="C96652">
    <property type="entry name" value="C96652"/>
</dbReference>
<dbReference type="PIR" id="S60050">
    <property type="entry name" value="S60050"/>
</dbReference>
<dbReference type="PDB" id="6YSA">
    <property type="method" value="X-ray"/>
    <property type="resolution" value="2.01 A"/>
    <property type="chains" value="A/B/C/D/E/F/G/H/I/J/K/L=47-486"/>
</dbReference>
<dbReference type="PDBsum" id="6YSA"/>
<dbReference type="SMR" id="Q39044"/>
<dbReference type="BioGRID" id="27790">
    <property type="interactions" value="1"/>
</dbReference>
<dbReference type="FunCoup" id="Q39044">
    <property type="interactions" value="372"/>
</dbReference>
<dbReference type="STRING" id="3702.Q39044"/>
<dbReference type="MEROPS" id="C13.001"/>
<dbReference type="GlyCosmos" id="Q39044">
    <property type="glycosylation" value="1 site, No reported glycans"/>
</dbReference>
<dbReference type="GlyGen" id="Q39044">
    <property type="glycosylation" value="1 site"/>
</dbReference>
<dbReference type="PaxDb" id="3702-AT1G62710.1"/>
<dbReference type="ProteomicsDB" id="242627"/>
<dbReference type="EnsemblPlants" id="AT1G62710.1">
    <property type="protein sequence ID" value="AT1G62710.1"/>
    <property type="gene ID" value="AT1G62710"/>
</dbReference>
<dbReference type="GeneID" id="842569"/>
<dbReference type="Gramene" id="AT1G62710.1">
    <property type="protein sequence ID" value="AT1G62710.1"/>
    <property type="gene ID" value="AT1G62710"/>
</dbReference>
<dbReference type="KEGG" id="ath:AT1G62710"/>
<dbReference type="Araport" id="AT1G62710"/>
<dbReference type="TAIR" id="AT1G62710">
    <property type="gene designation" value="BETA-VPE"/>
</dbReference>
<dbReference type="eggNOG" id="KOG1348">
    <property type="taxonomic scope" value="Eukaryota"/>
</dbReference>
<dbReference type="HOGENOM" id="CLU_024160_0_0_1"/>
<dbReference type="InParanoid" id="Q39044"/>
<dbReference type="OMA" id="RGVIINH"/>
<dbReference type="OrthoDB" id="192611at2759"/>
<dbReference type="PhylomeDB" id="Q39044"/>
<dbReference type="PRO" id="PR:Q39044"/>
<dbReference type="Proteomes" id="UP000006548">
    <property type="component" value="Chromosome 1"/>
</dbReference>
<dbReference type="ExpressionAtlas" id="Q39044">
    <property type="expression patterns" value="baseline and differential"/>
</dbReference>
<dbReference type="GO" id="GO:0000326">
    <property type="term" value="C:protein storage vacuole"/>
    <property type="evidence" value="ECO:0000250"/>
    <property type="project" value="UniProtKB"/>
</dbReference>
<dbReference type="GO" id="GO:0004197">
    <property type="term" value="F:cysteine-type endopeptidase activity"/>
    <property type="evidence" value="ECO:0000250"/>
    <property type="project" value="UniProtKB"/>
</dbReference>
<dbReference type="GO" id="GO:0051603">
    <property type="term" value="P:proteolysis involved in protein catabolic process"/>
    <property type="evidence" value="ECO:0007669"/>
    <property type="project" value="InterPro"/>
</dbReference>
<dbReference type="GO" id="GO:0006624">
    <property type="term" value="P:vacuolar protein processing"/>
    <property type="evidence" value="ECO:0000250"/>
    <property type="project" value="TAIR"/>
</dbReference>
<dbReference type="CDD" id="cd21115">
    <property type="entry name" value="legumain_C"/>
    <property type="match status" value="1"/>
</dbReference>
<dbReference type="FunFam" id="1.10.132.130:FF:000001">
    <property type="entry name" value="Vacuolar-processing enzyme beta-isozyme"/>
    <property type="match status" value="1"/>
</dbReference>
<dbReference type="FunFam" id="3.40.50.1460:FF:000005">
    <property type="entry name" value="Vacuolar-processing enzyme beta-isozyme"/>
    <property type="match status" value="1"/>
</dbReference>
<dbReference type="Gene3D" id="1.10.132.130">
    <property type="match status" value="1"/>
</dbReference>
<dbReference type="Gene3D" id="3.40.50.1460">
    <property type="match status" value="1"/>
</dbReference>
<dbReference type="InterPro" id="IPR043577">
    <property type="entry name" value="AE"/>
</dbReference>
<dbReference type="InterPro" id="IPR048501">
    <property type="entry name" value="Legum_prodom"/>
</dbReference>
<dbReference type="InterPro" id="IPR046427">
    <property type="entry name" value="Legumain_prodom_sf"/>
</dbReference>
<dbReference type="InterPro" id="IPR001096">
    <property type="entry name" value="Peptidase_C13"/>
</dbReference>
<dbReference type="PANTHER" id="PTHR12000">
    <property type="entry name" value="HEMOGLOBINASE FAMILY MEMBER"/>
    <property type="match status" value="1"/>
</dbReference>
<dbReference type="PANTHER" id="PTHR12000:SF42">
    <property type="entry name" value="LEGUMAIN"/>
    <property type="match status" value="1"/>
</dbReference>
<dbReference type="Pfam" id="PF20985">
    <property type="entry name" value="Legum_prodom"/>
    <property type="match status" value="1"/>
</dbReference>
<dbReference type="Pfam" id="PF01650">
    <property type="entry name" value="Peptidase_C13"/>
    <property type="match status" value="1"/>
</dbReference>
<dbReference type="PIRSF" id="PIRSF500139">
    <property type="entry name" value="AE"/>
    <property type="match status" value="1"/>
</dbReference>
<dbReference type="PIRSF" id="PIRSF019663">
    <property type="entry name" value="Legumain"/>
    <property type="match status" value="1"/>
</dbReference>
<dbReference type="PRINTS" id="PR00776">
    <property type="entry name" value="HEMOGLOBNASE"/>
</dbReference>
<organism>
    <name type="scientific">Arabidopsis thaliana</name>
    <name type="common">Mouse-ear cress</name>
    <dbReference type="NCBI Taxonomy" id="3702"/>
    <lineage>
        <taxon>Eukaryota</taxon>
        <taxon>Viridiplantae</taxon>
        <taxon>Streptophyta</taxon>
        <taxon>Embryophyta</taxon>
        <taxon>Tracheophyta</taxon>
        <taxon>Spermatophyta</taxon>
        <taxon>Magnoliopsida</taxon>
        <taxon>eudicotyledons</taxon>
        <taxon>Gunneridae</taxon>
        <taxon>Pentapetalae</taxon>
        <taxon>rosids</taxon>
        <taxon>malvids</taxon>
        <taxon>Brassicales</taxon>
        <taxon>Brassicaceae</taxon>
        <taxon>Camelineae</taxon>
        <taxon>Arabidopsis</taxon>
    </lineage>
</organism>